<accession>Q5X863</accession>
<gene>
    <name evidence="1" type="primary">rpsG</name>
    <name type="ordered locus">lpp0390</name>
</gene>
<proteinExistence type="inferred from homology"/>
<dbReference type="EMBL" id="CR628336">
    <property type="protein sequence ID" value="CAH11538.1"/>
    <property type="molecule type" value="Genomic_DNA"/>
</dbReference>
<dbReference type="RefSeq" id="WP_010946075.1">
    <property type="nucleotide sequence ID" value="NC_006368.1"/>
</dbReference>
<dbReference type="SMR" id="Q5X863"/>
<dbReference type="GeneID" id="57034328"/>
<dbReference type="KEGG" id="lpp:lpp0390"/>
<dbReference type="LegioList" id="lpp0390"/>
<dbReference type="HOGENOM" id="CLU_072226_1_1_6"/>
<dbReference type="GO" id="GO:0015935">
    <property type="term" value="C:small ribosomal subunit"/>
    <property type="evidence" value="ECO:0007669"/>
    <property type="project" value="InterPro"/>
</dbReference>
<dbReference type="GO" id="GO:0019843">
    <property type="term" value="F:rRNA binding"/>
    <property type="evidence" value="ECO:0007669"/>
    <property type="project" value="UniProtKB-UniRule"/>
</dbReference>
<dbReference type="GO" id="GO:0003735">
    <property type="term" value="F:structural constituent of ribosome"/>
    <property type="evidence" value="ECO:0007669"/>
    <property type="project" value="InterPro"/>
</dbReference>
<dbReference type="GO" id="GO:0000049">
    <property type="term" value="F:tRNA binding"/>
    <property type="evidence" value="ECO:0007669"/>
    <property type="project" value="UniProtKB-UniRule"/>
</dbReference>
<dbReference type="GO" id="GO:0006412">
    <property type="term" value="P:translation"/>
    <property type="evidence" value="ECO:0007669"/>
    <property type="project" value="UniProtKB-UniRule"/>
</dbReference>
<dbReference type="CDD" id="cd14869">
    <property type="entry name" value="uS7_Bacteria"/>
    <property type="match status" value="1"/>
</dbReference>
<dbReference type="FunFam" id="1.10.455.10:FF:000001">
    <property type="entry name" value="30S ribosomal protein S7"/>
    <property type="match status" value="1"/>
</dbReference>
<dbReference type="Gene3D" id="1.10.455.10">
    <property type="entry name" value="Ribosomal protein S7 domain"/>
    <property type="match status" value="1"/>
</dbReference>
<dbReference type="HAMAP" id="MF_00480_B">
    <property type="entry name" value="Ribosomal_uS7_B"/>
    <property type="match status" value="1"/>
</dbReference>
<dbReference type="InterPro" id="IPR000235">
    <property type="entry name" value="Ribosomal_uS7"/>
</dbReference>
<dbReference type="InterPro" id="IPR005717">
    <property type="entry name" value="Ribosomal_uS7_bac/org-type"/>
</dbReference>
<dbReference type="InterPro" id="IPR023798">
    <property type="entry name" value="Ribosomal_uS7_dom"/>
</dbReference>
<dbReference type="InterPro" id="IPR036823">
    <property type="entry name" value="Ribosomal_uS7_dom_sf"/>
</dbReference>
<dbReference type="NCBIfam" id="TIGR01029">
    <property type="entry name" value="rpsG_bact"/>
    <property type="match status" value="1"/>
</dbReference>
<dbReference type="PANTHER" id="PTHR11205">
    <property type="entry name" value="RIBOSOMAL PROTEIN S7"/>
    <property type="match status" value="1"/>
</dbReference>
<dbReference type="Pfam" id="PF00177">
    <property type="entry name" value="Ribosomal_S7"/>
    <property type="match status" value="1"/>
</dbReference>
<dbReference type="PIRSF" id="PIRSF002122">
    <property type="entry name" value="RPS7p_RPS7a_RPS5e_RPS7o"/>
    <property type="match status" value="1"/>
</dbReference>
<dbReference type="SUPFAM" id="SSF47973">
    <property type="entry name" value="Ribosomal protein S7"/>
    <property type="match status" value="1"/>
</dbReference>
<comment type="function">
    <text evidence="1">One of the primary rRNA binding proteins, it binds directly to 16S rRNA where it nucleates assembly of the head domain of the 30S subunit. Is located at the subunit interface close to the decoding center, probably blocks exit of the E-site tRNA.</text>
</comment>
<comment type="subunit">
    <text evidence="1">Part of the 30S ribosomal subunit. Contacts proteins S9 and S11.</text>
</comment>
<comment type="similarity">
    <text evidence="1">Belongs to the universal ribosomal protein uS7 family.</text>
</comment>
<sequence length="175" mass="19791">MPRRREVPKREILPDPKHHSELLAKFINVLMVSGKKSIAEKITYGALSVMEERVKKIKKNEEDGSETGSSGSAGAVLRYFEEALDNVRPSVEVRSRRVGGATYQVPVEVRHDRSIALGMRWIVQAARTRGEKGMMLRLAGELMDAYENKGSAVKKREDTHKMAKANQAFAHFRWN</sequence>
<name>RS7_LEGPA</name>
<feature type="chain" id="PRO_0000124279" description="Small ribosomal subunit protein uS7">
    <location>
        <begin position="1"/>
        <end position="175"/>
    </location>
</feature>
<reference key="1">
    <citation type="journal article" date="2004" name="Nat. Genet.">
        <title>Evidence in the Legionella pneumophila genome for exploitation of host cell functions and high genome plasticity.</title>
        <authorList>
            <person name="Cazalet C."/>
            <person name="Rusniok C."/>
            <person name="Brueggemann H."/>
            <person name="Zidane N."/>
            <person name="Magnier A."/>
            <person name="Ma L."/>
            <person name="Tichit M."/>
            <person name="Jarraud S."/>
            <person name="Bouchier C."/>
            <person name="Vandenesch F."/>
            <person name="Kunst F."/>
            <person name="Etienne J."/>
            <person name="Glaser P."/>
            <person name="Buchrieser C."/>
        </authorList>
    </citation>
    <scope>NUCLEOTIDE SEQUENCE [LARGE SCALE GENOMIC DNA]</scope>
    <source>
        <strain>Paris</strain>
    </source>
</reference>
<organism>
    <name type="scientific">Legionella pneumophila (strain Paris)</name>
    <dbReference type="NCBI Taxonomy" id="297246"/>
    <lineage>
        <taxon>Bacteria</taxon>
        <taxon>Pseudomonadati</taxon>
        <taxon>Pseudomonadota</taxon>
        <taxon>Gammaproteobacteria</taxon>
        <taxon>Legionellales</taxon>
        <taxon>Legionellaceae</taxon>
        <taxon>Legionella</taxon>
    </lineage>
</organism>
<evidence type="ECO:0000255" key="1">
    <source>
        <dbReference type="HAMAP-Rule" id="MF_00480"/>
    </source>
</evidence>
<evidence type="ECO:0000305" key="2"/>
<protein>
    <recommendedName>
        <fullName evidence="1">Small ribosomal subunit protein uS7</fullName>
    </recommendedName>
    <alternativeName>
        <fullName evidence="2">30S ribosomal protein S7</fullName>
    </alternativeName>
</protein>
<keyword id="KW-0687">Ribonucleoprotein</keyword>
<keyword id="KW-0689">Ribosomal protein</keyword>
<keyword id="KW-0694">RNA-binding</keyword>
<keyword id="KW-0699">rRNA-binding</keyword>
<keyword id="KW-0820">tRNA-binding</keyword>